<organism>
    <name type="scientific">Shewanella amazonensis (strain ATCC BAA-1098 / SB2B)</name>
    <dbReference type="NCBI Taxonomy" id="326297"/>
    <lineage>
        <taxon>Bacteria</taxon>
        <taxon>Pseudomonadati</taxon>
        <taxon>Pseudomonadota</taxon>
        <taxon>Gammaproteobacteria</taxon>
        <taxon>Alteromonadales</taxon>
        <taxon>Shewanellaceae</taxon>
        <taxon>Shewanella</taxon>
    </lineage>
</organism>
<comment type="function">
    <text evidence="1">Transfers a GMP moiety from GTP to Mo-molybdopterin (Mo-MPT) cofactor (Moco or molybdenum cofactor) to form Mo-molybdopterin guanine dinucleotide (Mo-MGD) cofactor.</text>
</comment>
<comment type="catalytic activity">
    <reaction evidence="1">
        <text>Mo-molybdopterin + GTP + H(+) = Mo-molybdopterin guanine dinucleotide + diphosphate</text>
        <dbReference type="Rhea" id="RHEA:34243"/>
        <dbReference type="ChEBI" id="CHEBI:15378"/>
        <dbReference type="ChEBI" id="CHEBI:33019"/>
        <dbReference type="ChEBI" id="CHEBI:37565"/>
        <dbReference type="ChEBI" id="CHEBI:71302"/>
        <dbReference type="ChEBI" id="CHEBI:71310"/>
        <dbReference type="EC" id="2.7.7.77"/>
    </reaction>
</comment>
<comment type="cofactor">
    <cofactor evidence="1">
        <name>Mg(2+)</name>
        <dbReference type="ChEBI" id="CHEBI:18420"/>
    </cofactor>
</comment>
<comment type="subunit">
    <text evidence="1">Monomer.</text>
</comment>
<comment type="subcellular location">
    <subcellularLocation>
        <location evidence="1">Cytoplasm</location>
    </subcellularLocation>
</comment>
<comment type="domain">
    <text evidence="1">The N-terminal domain determines nucleotide recognition and specific binding, while the C-terminal domain determines the specific binding to the target protein.</text>
</comment>
<comment type="similarity">
    <text evidence="1">Belongs to the MobA family.</text>
</comment>
<accession>A1S1S7</accession>
<dbReference type="EC" id="2.7.7.77" evidence="1"/>
<dbReference type="EMBL" id="CP000507">
    <property type="protein sequence ID" value="ABL98333.1"/>
    <property type="molecule type" value="Genomic_DNA"/>
</dbReference>
<dbReference type="RefSeq" id="WP_011758244.1">
    <property type="nucleotide sequence ID" value="NC_008700.1"/>
</dbReference>
<dbReference type="SMR" id="A1S1S7"/>
<dbReference type="STRING" id="326297.Sama_0121"/>
<dbReference type="KEGG" id="saz:Sama_0121"/>
<dbReference type="eggNOG" id="COG0746">
    <property type="taxonomic scope" value="Bacteria"/>
</dbReference>
<dbReference type="HOGENOM" id="CLU_055597_5_1_6"/>
<dbReference type="OrthoDB" id="9788394at2"/>
<dbReference type="Proteomes" id="UP000009175">
    <property type="component" value="Chromosome"/>
</dbReference>
<dbReference type="GO" id="GO:0005737">
    <property type="term" value="C:cytoplasm"/>
    <property type="evidence" value="ECO:0007669"/>
    <property type="project" value="UniProtKB-SubCell"/>
</dbReference>
<dbReference type="GO" id="GO:0005525">
    <property type="term" value="F:GTP binding"/>
    <property type="evidence" value="ECO:0007669"/>
    <property type="project" value="UniProtKB-UniRule"/>
</dbReference>
<dbReference type="GO" id="GO:0046872">
    <property type="term" value="F:metal ion binding"/>
    <property type="evidence" value="ECO:0007669"/>
    <property type="project" value="UniProtKB-KW"/>
</dbReference>
<dbReference type="GO" id="GO:0061603">
    <property type="term" value="F:molybdenum cofactor guanylyltransferase activity"/>
    <property type="evidence" value="ECO:0007669"/>
    <property type="project" value="UniProtKB-EC"/>
</dbReference>
<dbReference type="GO" id="GO:1902758">
    <property type="term" value="P:bis(molybdopterin guanine dinucleotide)molybdenum biosynthetic process"/>
    <property type="evidence" value="ECO:0007669"/>
    <property type="project" value="TreeGrafter"/>
</dbReference>
<dbReference type="CDD" id="cd02503">
    <property type="entry name" value="MobA"/>
    <property type="match status" value="1"/>
</dbReference>
<dbReference type="Gene3D" id="3.90.550.10">
    <property type="entry name" value="Spore Coat Polysaccharide Biosynthesis Protein SpsA, Chain A"/>
    <property type="match status" value="1"/>
</dbReference>
<dbReference type="HAMAP" id="MF_00316">
    <property type="entry name" value="MobA"/>
    <property type="match status" value="1"/>
</dbReference>
<dbReference type="InterPro" id="IPR025877">
    <property type="entry name" value="MobA-like_NTP_Trfase"/>
</dbReference>
<dbReference type="InterPro" id="IPR013482">
    <property type="entry name" value="Molybde_CF_guanTrfase"/>
</dbReference>
<dbReference type="InterPro" id="IPR029044">
    <property type="entry name" value="Nucleotide-diphossugar_trans"/>
</dbReference>
<dbReference type="NCBIfam" id="TIGR02665">
    <property type="entry name" value="molyb_mobA"/>
    <property type="match status" value="1"/>
</dbReference>
<dbReference type="PANTHER" id="PTHR19136">
    <property type="entry name" value="MOLYBDENUM COFACTOR GUANYLYLTRANSFERASE"/>
    <property type="match status" value="1"/>
</dbReference>
<dbReference type="PANTHER" id="PTHR19136:SF81">
    <property type="entry name" value="MOLYBDENUM COFACTOR GUANYLYLTRANSFERASE"/>
    <property type="match status" value="1"/>
</dbReference>
<dbReference type="Pfam" id="PF12804">
    <property type="entry name" value="NTP_transf_3"/>
    <property type="match status" value="1"/>
</dbReference>
<dbReference type="SUPFAM" id="SSF53448">
    <property type="entry name" value="Nucleotide-diphospho-sugar transferases"/>
    <property type="match status" value="1"/>
</dbReference>
<feature type="chain" id="PRO_1000019145" description="Molybdenum cofactor guanylyltransferase">
    <location>
        <begin position="1"/>
        <end position="196"/>
    </location>
</feature>
<feature type="binding site" evidence="1">
    <location>
        <begin position="10"/>
        <end position="12"/>
    </location>
    <ligand>
        <name>GTP</name>
        <dbReference type="ChEBI" id="CHEBI:37565"/>
    </ligand>
</feature>
<feature type="binding site" evidence="1">
    <location>
        <position position="23"/>
    </location>
    <ligand>
        <name>GTP</name>
        <dbReference type="ChEBI" id="CHEBI:37565"/>
    </ligand>
</feature>
<feature type="binding site" evidence="1">
    <location>
        <position position="51"/>
    </location>
    <ligand>
        <name>GTP</name>
        <dbReference type="ChEBI" id="CHEBI:37565"/>
    </ligand>
</feature>
<feature type="binding site" evidence="1">
    <location>
        <position position="69"/>
    </location>
    <ligand>
        <name>GTP</name>
        <dbReference type="ChEBI" id="CHEBI:37565"/>
    </ligand>
</feature>
<feature type="binding site" evidence="1">
    <location>
        <position position="99"/>
    </location>
    <ligand>
        <name>GTP</name>
        <dbReference type="ChEBI" id="CHEBI:37565"/>
    </ligand>
</feature>
<feature type="binding site" evidence="1">
    <location>
        <position position="99"/>
    </location>
    <ligand>
        <name>Mg(2+)</name>
        <dbReference type="ChEBI" id="CHEBI:18420"/>
    </ligand>
</feature>
<protein>
    <recommendedName>
        <fullName evidence="1">Molybdenum cofactor guanylyltransferase</fullName>
        <shortName evidence="1">MoCo guanylyltransferase</shortName>
        <ecNumber evidence="1">2.7.7.77</ecNumber>
    </recommendedName>
    <alternativeName>
        <fullName evidence="1">GTP:molybdopterin guanylyltransferase</fullName>
    </alternativeName>
    <alternativeName>
        <fullName evidence="1">Mo-MPT guanylyltransferase</fullName>
    </alternativeName>
    <alternativeName>
        <fullName evidence="1">Molybdopterin guanylyltransferase</fullName>
    </alternativeName>
    <alternativeName>
        <fullName evidence="1">Molybdopterin-guanine dinucleotide synthase</fullName>
        <shortName evidence="1">MGD synthase</shortName>
    </alternativeName>
</protein>
<proteinExistence type="inferred from homology"/>
<reference key="1">
    <citation type="submission" date="2006-12" db="EMBL/GenBank/DDBJ databases">
        <title>Complete sequence of Shewanella amazonensis SB2B.</title>
        <authorList>
            <consortium name="US DOE Joint Genome Institute"/>
            <person name="Copeland A."/>
            <person name="Lucas S."/>
            <person name="Lapidus A."/>
            <person name="Barry K."/>
            <person name="Detter J.C."/>
            <person name="Glavina del Rio T."/>
            <person name="Hammon N."/>
            <person name="Israni S."/>
            <person name="Dalin E."/>
            <person name="Tice H."/>
            <person name="Pitluck S."/>
            <person name="Munk A.C."/>
            <person name="Brettin T."/>
            <person name="Bruce D."/>
            <person name="Han C."/>
            <person name="Tapia R."/>
            <person name="Gilna P."/>
            <person name="Schmutz J."/>
            <person name="Larimer F."/>
            <person name="Land M."/>
            <person name="Hauser L."/>
            <person name="Kyrpides N."/>
            <person name="Mikhailova N."/>
            <person name="Fredrickson J."/>
            <person name="Richardson P."/>
        </authorList>
    </citation>
    <scope>NUCLEOTIDE SEQUENCE [LARGE SCALE GENOMIC DNA]</scope>
    <source>
        <strain>ATCC BAA-1098 / SB2B</strain>
    </source>
</reference>
<name>MOBA_SHEAM</name>
<keyword id="KW-0963">Cytoplasm</keyword>
<keyword id="KW-0342">GTP-binding</keyword>
<keyword id="KW-0460">Magnesium</keyword>
<keyword id="KW-0479">Metal-binding</keyword>
<keyword id="KW-0501">Molybdenum cofactor biosynthesis</keyword>
<keyword id="KW-0547">Nucleotide-binding</keyword>
<keyword id="KW-1185">Reference proteome</keyword>
<keyword id="KW-0808">Transferase</keyword>
<gene>
    <name evidence="1" type="primary">mobA</name>
    <name type="ordered locus">Sama_0121</name>
</gene>
<sequence length="196" mass="21173">MSLRIDAVILAGGQARRMGGQDKGLVELLGKPMIEHAITRIQPQVKEILINANRNQNLYAQFADCVFGDEDSGFLGPLAGMVTAMGKTQADLLLVVPCDCPCLPTDLVARMAAALEAEAADLAVASDGEYEQPVVMLLKPSLRDSMKAFLAAGERKIDFWYAKHKVAVVSFADQPNAFVNVNTPEQVEQLSKALTQ</sequence>
<evidence type="ECO:0000255" key="1">
    <source>
        <dbReference type="HAMAP-Rule" id="MF_00316"/>
    </source>
</evidence>